<gene>
    <name evidence="11" type="primary">Kcnh5</name>
    <name evidence="9" type="synonym">Eag2</name>
</gene>
<proteinExistence type="evidence at transcript level"/>
<name>KCNH5_RAT</name>
<reference key="1">
    <citation type="journal article" date="1999" name="J. Neurosci.">
        <title>Cloning of components of a novel subthreshold-activating K+ channel with a unique pattern of expression in the cerebral cortex.</title>
        <authorList>
            <person name="Saganich M.J."/>
            <person name="Vega-Saenz de Miera E."/>
            <person name="Nadal M.S."/>
            <person name="Baker H."/>
            <person name="Coetzee W.A."/>
            <person name="Rudy B."/>
        </authorList>
    </citation>
    <scope>NUCLEOTIDE SEQUENCE [MRNA]</scope>
    <scope>FUNCTION</scope>
    <scope>TRANSPORTER ACTIVITY</scope>
    <scope>TISSUE SPECIFICITY</scope>
    <source>
        <strain>Sprague-Dawley</strain>
        <tissue>Thalamus</tissue>
    </source>
</reference>
<reference key="2">
    <citation type="journal article" date="2000" name="Mol. Cell. Neurosci.">
        <title>Cloning and functional expression of rat eag2, a new member of the ether-a-go-go family of potassium channels and comparison of its distribution with that of eag1.</title>
        <authorList>
            <person name="Ludwig J."/>
            <person name="Weseloh R."/>
            <person name="Karschin C."/>
            <person name="Liu Q."/>
            <person name="Netzer R."/>
            <person name="Engeland B."/>
            <person name="Stansfeld C."/>
            <person name="Pongs O."/>
        </authorList>
    </citation>
    <scope>NUCLEOTIDE SEQUENCE [MRNA]</scope>
    <scope>FUNCTION</scope>
    <scope>TRANSPORTER ACTIVITY</scope>
    <scope>ACTIVITY REGULATION</scope>
    <scope>TISSUE SPECIFICITY</scope>
    <source>
        <tissue>Cerebellum</tissue>
    </source>
</reference>
<reference key="3">
    <citation type="journal article" date="1998" name="J. Physiol. (Lond.)">
        <title>Cloning of a mammalian elk potassium channel gene and EAG mRNA distribution in rat sympathetic ganglia.</title>
        <authorList>
            <person name="Shi W."/>
            <person name="Wang H.-S."/>
            <person name="Pan Z."/>
            <person name="Wymore R.S."/>
            <person name="Cohen I.S."/>
            <person name="McKinnon D."/>
            <person name="Dixon J.E."/>
        </authorList>
    </citation>
    <scope>NUCLEOTIDE SEQUENCE [MRNA] OF 220-360</scope>
    <source>
        <tissue>Brain</tissue>
    </source>
</reference>
<organism>
    <name type="scientific">Rattus norvegicus</name>
    <name type="common">Rat</name>
    <dbReference type="NCBI Taxonomy" id="10116"/>
    <lineage>
        <taxon>Eukaryota</taxon>
        <taxon>Metazoa</taxon>
        <taxon>Chordata</taxon>
        <taxon>Craniata</taxon>
        <taxon>Vertebrata</taxon>
        <taxon>Euteleostomi</taxon>
        <taxon>Mammalia</taxon>
        <taxon>Eutheria</taxon>
        <taxon>Euarchontoglires</taxon>
        <taxon>Glires</taxon>
        <taxon>Rodentia</taxon>
        <taxon>Myomorpha</taxon>
        <taxon>Muroidea</taxon>
        <taxon>Muridae</taxon>
        <taxon>Murinae</taxon>
        <taxon>Rattus</taxon>
    </lineage>
</organism>
<dbReference type="EMBL" id="AF185637">
    <property type="protein sequence ID" value="AAF19354.1"/>
    <property type="molecule type" value="mRNA"/>
</dbReference>
<dbReference type="EMBL" id="AJ250280">
    <property type="protein sequence ID" value="CAC20863.1"/>
    <property type="molecule type" value="mRNA"/>
</dbReference>
<dbReference type="EMBL" id="AF073891">
    <property type="protein sequence ID" value="AAC61521.1"/>
    <property type="molecule type" value="mRNA"/>
</dbReference>
<dbReference type="RefSeq" id="NP_598294.1">
    <property type="nucleotide sequence ID" value="NM_133610.2"/>
</dbReference>
<dbReference type="SMR" id="Q9EPI9"/>
<dbReference type="FunCoup" id="Q9EPI9">
    <property type="interactions" value="1126"/>
</dbReference>
<dbReference type="STRING" id="10116.ENSRNOP00000013275"/>
<dbReference type="GlyCosmos" id="Q9EPI9">
    <property type="glycosylation" value="1 site, No reported glycans"/>
</dbReference>
<dbReference type="GlyGen" id="Q9EPI9">
    <property type="glycosylation" value="1 site"/>
</dbReference>
<dbReference type="iPTMnet" id="Q9EPI9"/>
<dbReference type="PhosphoSitePlus" id="Q9EPI9"/>
<dbReference type="SwissPalm" id="Q9EPI9"/>
<dbReference type="PaxDb" id="10116-ENSRNOP00000013275"/>
<dbReference type="Ensembl" id="ENSRNOT00000013275.5">
    <property type="protein sequence ID" value="ENSRNOP00000013275.2"/>
    <property type="gene ID" value="ENSRNOG00000009542.6"/>
</dbReference>
<dbReference type="GeneID" id="171146"/>
<dbReference type="KEGG" id="rno:171146"/>
<dbReference type="UCSC" id="RGD:621417">
    <property type="organism name" value="rat"/>
</dbReference>
<dbReference type="AGR" id="RGD:621417"/>
<dbReference type="CTD" id="27133"/>
<dbReference type="RGD" id="621417">
    <property type="gene designation" value="Kcnh5"/>
</dbReference>
<dbReference type="eggNOG" id="KOG0501">
    <property type="taxonomic scope" value="Eukaryota"/>
</dbReference>
<dbReference type="GeneTree" id="ENSGT00940000156540"/>
<dbReference type="HOGENOM" id="CLU_005746_3_1_1"/>
<dbReference type="InParanoid" id="Q9EPI9"/>
<dbReference type="OMA" id="PMNKTET"/>
<dbReference type="OrthoDB" id="447251at2759"/>
<dbReference type="PhylomeDB" id="Q9EPI9"/>
<dbReference type="TreeFam" id="TF313130"/>
<dbReference type="Reactome" id="R-RNO-1296072">
    <property type="pathway name" value="Voltage gated Potassium channels"/>
</dbReference>
<dbReference type="PRO" id="PR:Q9EPI9"/>
<dbReference type="Proteomes" id="UP000002494">
    <property type="component" value="Chromosome 6"/>
</dbReference>
<dbReference type="Bgee" id="ENSRNOG00000009542">
    <property type="expression patterns" value="Expressed in frontal cortex and 1 other cell type or tissue"/>
</dbReference>
<dbReference type="GO" id="GO:0009986">
    <property type="term" value="C:cell surface"/>
    <property type="evidence" value="ECO:0000266"/>
    <property type="project" value="RGD"/>
</dbReference>
<dbReference type="GO" id="GO:0005886">
    <property type="term" value="C:plasma membrane"/>
    <property type="evidence" value="ECO:0000318"/>
    <property type="project" value="GO_Central"/>
</dbReference>
<dbReference type="GO" id="GO:0008076">
    <property type="term" value="C:voltage-gated potassium channel complex"/>
    <property type="evidence" value="ECO:0000250"/>
    <property type="project" value="UniProtKB"/>
</dbReference>
<dbReference type="GO" id="GO:0005516">
    <property type="term" value="F:calmodulin binding"/>
    <property type="evidence" value="ECO:0007669"/>
    <property type="project" value="UniProtKB-KW"/>
</dbReference>
<dbReference type="GO" id="GO:0005251">
    <property type="term" value="F:delayed rectifier potassium channel activity"/>
    <property type="evidence" value="ECO:0000314"/>
    <property type="project" value="UniProtKB"/>
</dbReference>
<dbReference type="GO" id="GO:0044877">
    <property type="term" value="F:protein-containing complex binding"/>
    <property type="evidence" value="ECO:0000353"/>
    <property type="project" value="RGD"/>
</dbReference>
<dbReference type="GO" id="GO:0044325">
    <property type="term" value="F:transmembrane transporter binding"/>
    <property type="evidence" value="ECO:0000353"/>
    <property type="project" value="RGD"/>
</dbReference>
<dbReference type="GO" id="GO:0005249">
    <property type="term" value="F:voltage-gated potassium channel activity"/>
    <property type="evidence" value="ECO:0000250"/>
    <property type="project" value="UniProtKB"/>
</dbReference>
<dbReference type="GO" id="GO:0071805">
    <property type="term" value="P:potassium ion transmembrane transport"/>
    <property type="evidence" value="ECO:0000318"/>
    <property type="project" value="GO_Central"/>
</dbReference>
<dbReference type="GO" id="GO:0006813">
    <property type="term" value="P:potassium ion transport"/>
    <property type="evidence" value="ECO:0000314"/>
    <property type="project" value="UniProtKB"/>
</dbReference>
<dbReference type="GO" id="GO:0010389">
    <property type="term" value="P:regulation of G2/M transition of mitotic cell cycle"/>
    <property type="evidence" value="ECO:0000266"/>
    <property type="project" value="RGD"/>
</dbReference>
<dbReference type="GO" id="GO:0042391">
    <property type="term" value="P:regulation of membrane potential"/>
    <property type="evidence" value="ECO:0000318"/>
    <property type="project" value="GO_Central"/>
</dbReference>
<dbReference type="CDD" id="cd00038">
    <property type="entry name" value="CAP_ED"/>
    <property type="match status" value="1"/>
</dbReference>
<dbReference type="CDD" id="cd00130">
    <property type="entry name" value="PAS"/>
    <property type="match status" value="1"/>
</dbReference>
<dbReference type="FunFam" id="1.10.1200.260:FF:000003">
    <property type="entry name" value="Potassium voltage-gated channel subfamily H member 1"/>
    <property type="match status" value="1"/>
</dbReference>
<dbReference type="FunFam" id="2.60.120.10:FF:000009">
    <property type="entry name" value="Potassium voltage-gated channel subfamily H member 1"/>
    <property type="match status" value="1"/>
</dbReference>
<dbReference type="FunFam" id="3.30.450.20:FF:000009">
    <property type="entry name" value="Potassium voltage-gated channel subfamily H member 1"/>
    <property type="match status" value="1"/>
</dbReference>
<dbReference type="FunFam" id="1.10.287.70:FF:000035">
    <property type="entry name" value="Potassium voltage-gated channel, subfamily H (Eag-related), member 1"/>
    <property type="match status" value="1"/>
</dbReference>
<dbReference type="Gene3D" id="1.10.1200.260">
    <property type="match status" value="1"/>
</dbReference>
<dbReference type="Gene3D" id="1.10.287.70">
    <property type="match status" value="1"/>
</dbReference>
<dbReference type="Gene3D" id="2.60.120.10">
    <property type="entry name" value="Jelly Rolls"/>
    <property type="match status" value="1"/>
</dbReference>
<dbReference type="Gene3D" id="3.30.450.20">
    <property type="entry name" value="PAS domain"/>
    <property type="match status" value="1"/>
</dbReference>
<dbReference type="InterPro" id="IPR000595">
    <property type="entry name" value="cNMP-bd_dom"/>
</dbReference>
<dbReference type="InterPro" id="IPR018490">
    <property type="entry name" value="cNMP-bd_dom_sf"/>
</dbReference>
<dbReference type="InterPro" id="IPR005821">
    <property type="entry name" value="Ion_trans_dom"/>
</dbReference>
<dbReference type="InterPro" id="IPR003949">
    <property type="entry name" value="K_chnl_volt-dep_EAG"/>
</dbReference>
<dbReference type="InterPro" id="IPR003938">
    <property type="entry name" value="K_chnl_volt-dep_EAG/ELK/ERG"/>
</dbReference>
<dbReference type="InterPro" id="IPR050818">
    <property type="entry name" value="KCNH_animal-type"/>
</dbReference>
<dbReference type="InterPro" id="IPR001610">
    <property type="entry name" value="PAC"/>
</dbReference>
<dbReference type="InterPro" id="IPR000014">
    <property type="entry name" value="PAS"/>
</dbReference>
<dbReference type="InterPro" id="IPR000700">
    <property type="entry name" value="PAS-assoc_C"/>
</dbReference>
<dbReference type="InterPro" id="IPR035965">
    <property type="entry name" value="PAS-like_dom_sf"/>
</dbReference>
<dbReference type="InterPro" id="IPR014710">
    <property type="entry name" value="RmlC-like_jellyroll"/>
</dbReference>
<dbReference type="NCBIfam" id="TIGR00229">
    <property type="entry name" value="sensory_box"/>
    <property type="match status" value="1"/>
</dbReference>
<dbReference type="PANTHER" id="PTHR10217:SF533">
    <property type="entry name" value="POTASSIUM VOLTAGE-GATED CHANNEL SUBFAMILY H MEMBER 5"/>
    <property type="match status" value="1"/>
</dbReference>
<dbReference type="PANTHER" id="PTHR10217">
    <property type="entry name" value="VOLTAGE AND LIGAND GATED POTASSIUM CHANNEL"/>
    <property type="match status" value="1"/>
</dbReference>
<dbReference type="Pfam" id="PF00027">
    <property type="entry name" value="cNMP_binding"/>
    <property type="match status" value="1"/>
</dbReference>
<dbReference type="Pfam" id="PF00520">
    <property type="entry name" value="Ion_trans"/>
    <property type="match status" value="1"/>
</dbReference>
<dbReference type="Pfam" id="PF13426">
    <property type="entry name" value="PAS_9"/>
    <property type="match status" value="1"/>
</dbReference>
<dbReference type="PRINTS" id="PR01463">
    <property type="entry name" value="EAGCHANLFMLY"/>
</dbReference>
<dbReference type="PRINTS" id="PR01464">
    <property type="entry name" value="EAGCHANNEL"/>
</dbReference>
<dbReference type="SMART" id="SM00100">
    <property type="entry name" value="cNMP"/>
    <property type="match status" value="1"/>
</dbReference>
<dbReference type="SMART" id="SM00086">
    <property type="entry name" value="PAC"/>
    <property type="match status" value="1"/>
</dbReference>
<dbReference type="SUPFAM" id="SSF51206">
    <property type="entry name" value="cAMP-binding domain-like"/>
    <property type="match status" value="1"/>
</dbReference>
<dbReference type="SUPFAM" id="SSF55785">
    <property type="entry name" value="PYP-like sensor domain (PAS domain)"/>
    <property type="match status" value="1"/>
</dbReference>
<dbReference type="SUPFAM" id="SSF81324">
    <property type="entry name" value="Voltage-gated potassium channels"/>
    <property type="match status" value="1"/>
</dbReference>
<dbReference type="PROSITE" id="PS50042">
    <property type="entry name" value="CNMP_BINDING_3"/>
    <property type="match status" value="1"/>
</dbReference>
<dbReference type="PROSITE" id="PS50113">
    <property type="entry name" value="PAC"/>
    <property type="match status" value="1"/>
</dbReference>
<evidence type="ECO:0000250" key="1"/>
<evidence type="ECO:0000250" key="2">
    <source>
        <dbReference type="UniProtKB" id="Q8NCM2"/>
    </source>
</evidence>
<evidence type="ECO:0000250" key="3">
    <source>
        <dbReference type="UniProtKB" id="Q920E3"/>
    </source>
</evidence>
<evidence type="ECO:0000255" key="4"/>
<evidence type="ECO:0000255" key="5">
    <source>
        <dbReference type="PROSITE-ProRule" id="PRU00141"/>
    </source>
</evidence>
<evidence type="ECO:0000256" key="6">
    <source>
        <dbReference type="SAM" id="MobiDB-lite"/>
    </source>
</evidence>
<evidence type="ECO:0000269" key="7">
    <source>
    </source>
</evidence>
<evidence type="ECO:0000269" key="8">
    <source>
    </source>
</evidence>
<evidence type="ECO:0000303" key="9">
    <source>
    </source>
</evidence>
<evidence type="ECO:0000305" key="10"/>
<evidence type="ECO:0000312" key="11">
    <source>
        <dbReference type="RGD" id="621417"/>
    </source>
</evidence>
<sequence>MPGGKRGLVAPQNTFLENIVRRSSESSFLLGNAQIVDWPVVYSNDGFCKLSGYHRADVMQKSSTCSFMYGELTDKKTIEKVRQTFDNYESNCFEVLLYKKNRTPVWFYMQIAPIRNEHEKVVLFLCTFKDITLFKQPIEDDSTKGWTKFARLTRALTNSRSVLQQLTPMNKTETVHKHSRLAEVLQLGSDILPQYKQEAPKTPPHIILHYCAFKTTWDWVILILTFYTAIMVPYNVSFKTKQNNIAWLVLDSVVDVIFLVDIVLNFHTTFVGPGGEVISDPKLIRMNYLKTWFVIDLLSCLPYDIINAFENVDEGISSLFSSLKVVRLLRLGRVARKLDHYLEYGAAVLVLLVCVFGLVAHWLACIWYSIGDYEVIDEVTNTIQIDSWLYQLALSIGTPYRYNTSAGIWEGGPSKDSLYVSSLYFTMTSLTTIGFGNIAPTTDVEKMFSVAMMMVGSLLYATIFGNVTTIFQQMYANTNRYHEMLNNVRDFLKLYQVPKGLSERVMDYIVSTWSMSKGIDTEKVLSICPKDMRADICVHLNRKVFNEHPAFRLASDGCLRALAVEFQTIHCAPGDLIYHAGESVDALCFVVSGSLEVIQDEEVVAILGKGDVFGDIFWKETTLAHACANVRALTYCDLHIIKREALLKVLDFYTAFANSFSRNLTLTCNLRKRIIFRKISDVKKEEEERLRQKNEVTLSIPVDHPVRKLFQKFKQQKELRNQGSAQSDPERSQLQVESRPLQNGASITGTSVVTVSQITPIQTSLAYVKTSETLKQNNRDAMELKPNGGAEPKCLKVNSPIRMKNGNGKGWLRLKNNMGAHEEKKEEWNNVTKAESMGLLSEDPKGSDSENSVTKNPLRKTDSCDSGITKSDLRLDKAGEARSPLEHSPSQADAKHPFYPIPEQALQTTLQEVKHELKEDIQLLSCRMTALEKQVAEILKLLSEKSVPQTSSPKPQIPLQVPPQIPCQDIFSVSRPESPESDKDEINF</sequence>
<comment type="function">
    <text evidence="7 8">Pore-forming (alpha) subunit of a voltage-gated delayed rectifier potassium channel that mediates outward-rectifying potassium currents which, on depolarization, reaches a steady-state level and do not inactivate (PubMed:10594062, PubMed:10882483). The kinetic is characterized by a slow activation time course and a small voltage dependence of the activation time constants, therefore, starts to open at more negative voltages (PubMed:10594062, PubMed:10882483). The activation kinetics depend on the prepulse potential and external divalent cation concentration (PubMed:10594062, PubMed:10882483). The time course of activation is biphasic with a fast and a slowly activating current component (PubMed:10594062, PubMed:10882483). With negative prepulses, the current activation is delayed and slowed down several fold, whereas more positive prepulses speed up activation, therefore the activation rate depends on holding potential (PubMed:10594062, PubMed:10882483).</text>
</comment>
<comment type="catalytic activity">
    <reaction evidence="7 8">
        <text>K(+)(in) = K(+)(out)</text>
        <dbReference type="Rhea" id="RHEA:29463"/>
        <dbReference type="ChEBI" id="CHEBI:29103"/>
    </reaction>
</comment>
<comment type="activity regulation">
    <text evidence="8">Inhibited by low nanomolar concentrations of cytosolic calcium.</text>
</comment>
<comment type="subunit">
    <text evidence="2">Homotetramer. The potassium channel is probably composed of a homo- or heterotetrameric complex of pore-forming alpha subunits that can associate with modulating beta subunits. Heteromultimer with KCNH1/EAG.</text>
</comment>
<comment type="subcellular location">
    <subcellularLocation>
        <location>Membrane</location>
        <topology>Multi-pass membrane protein</topology>
    </subcellularLocation>
</comment>
<comment type="tissue specificity">
    <text evidence="7 8">Detected in adult testis and in embryonic and adult brain, but not in other tissues (PubMed:10594062). Highly expressed in specific brain areas, such as neocortex, olfactory bulb, primary olfactory cortex and brain stem (PubMed:10594062, PubMed:10882483). In cortex, expression is concentrated in a narrow band toward the middle lamella (layer IV) (PubMed:10594062, PubMed:10882483). Moderately expressed in spinal cord, dorsal thalamic nuclei, medial hypothalamus, colliculus, lateral lemniscus, pontine nuclei and Islands of Calleja (PubMed:10594062, PubMed:10882483).</text>
</comment>
<comment type="domain">
    <text evidence="2">Contains a voltage sensor domain (VSD) formed from the S1-S4 transmembrane helices, a pore domain formed from the S5-pore loop-S6 domain and the C-terminal cyclic nucleotide binding homology domain (CNBHD).</text>
</comment>
<comment type="domain">
    <text evidence="2">The segment S4 is probably the voltage-sensor and is characterized by a series of positively charged amino acids at every third position.</text>
</comment>
<comment type="similarity">
    <text evidence="10">Belongs to the potassium channel family. H (Eag) (TC 1.A.1.20) subfamily. Kv10.2/KCNH5 sub-subfamily.</text>
</comment>
<keyword id="KW-0112">Calmodulin-binding</keyword>
<keyword id="KW-0325">Glycoprotein</keyword>
<keyword id="KW-0407">Ion channel</keyword>
<keyword id="KW-0406">Ion transport</keyword>
<keyword id="KW-1017">Isopeptide bond</keyword>
<keyword id="KW-0472">Membrane</keyword>
<keyword id="KW-0597">Phosphoprotein</keyword>
<keyword id="KW-0630">Potassium</keyword>
<keyword id="KW-0631">Potassium channel</keyword>
<keyword id="KW-0633">Potassium transport</keyword>
<keyword id="KW-1185">Reference proteome</keyword>
<keyword id="KW-0812">Transmembrane</keyword>
<keyword id="KW-1133">Transmembrane helix</keyword>
<keyword id="KW-0813">Transport</keyword>
<keyword id="KW-0832">Ubl conjugation</keyword>
<keyword id="KW-0851">Voltage-gated channel</keyword>
<feature type="chain" id="PRO_0000054012" description="Voltage-gated delayed rectifier potassium channel KCNH5">
    <location>
        <begin position="1"/>
        <end position="988"/>
    </location>
</feature>
<feature type="topological domain" description="Cytoplasmic" evidence="4">
    <location>
        <begin position="1"/>
        <end position="217"/>
    </location>
</feature>
<feature type="transmembrane region" description="Helical; Name=Segment S1" evidence="4">
    <location>
        <begin position="218"/>
        <end position="238"/>
    </location>
</feature>
<feature type="topological domain" description="Extracellular" evidence="4">
    <location>
        <begin position="239"/>
        <end position="243"/>
    </location>
</feature>
<feature type="transmembrane region" description="Helical; Name=Segment S2" evidence="4">
    <location>
        <begin position="244"/>
        <end position="264"/>
    </location>
</feature>
<feature type="topological domain" description="Cytoplasmic" evidence="4">
    <location>
        <begin position="265"/>
        <end position="291"/>
    </location>
</feature>
<feature type="transmembrane region" description="Helical; Name=Segment S3" evidence="4">
    <location>
        <begin position="292"/>
        <end position="312"/>
    </location>
</feature>
<feature type="topological domain" description="Extracellular" evidence="4">
    <location>
        <begin position="313"/>
        <end position="319"/>
    </location>
</feature>
<feature type="transmembrane region" description="Helical; Voltage-sensor; Name=Segment S4" evidence="4">
    <location>
        <begin position="320"/>
        <end position="340"/>
    </location>
</feature>
<feature type="topological domain" description="Cytoplasmic" evidence="4">
    <location>
        <begin position="341"/>
        <end position="346"/>
    </location>
</feature>
<feature type="transmembrane region" description="Helical; Name=Segment S5" evidence="4">
    <location>
        <begin position="347"/>
        <end position="367"/>
    </location>
</feature>
<feature type="topological domain" description="Extracellular" evidence="4">
    <location>
        <begin position="368"/>
        <end position="419"/>
    </location>
</feature>
<feature type="intramembrane region" description="Pore-forming; Name=Segment H5" evidence="4">
    <location>
        <begin position="420"/>
        <end position="440"/>
    </location>
</feature>
<feature type="topological domain" description="Extracellular" evidence="4">
    <location>
        <begin position="441"/>
        <end position="446"/>
    </location>
</feature>
<feature type="transmembrane region" description="Helical; Name=Segment S6" evidence="4">
    <location>
        <begin position="447"/>
        <end position="467"/>
    </location>
</feature>
<feature type="topological domain" description="Cytoplasmic" evidence="4">
    <location>
        <begin position="468"/>
        <end position="988"/>
    </location>
</feature>
<feature type="domain" description="PAS">
    <location>
        <begin position="14"/>
        <end position="86"/>
    </location>
</feature>
<feature type="domain" description="PAC" evidence="5">
    <location>
        <begin position="91"/>
        <end position="143"/>
    </location>
</feature>
<feature type="region of interest" description="Calmodulin-binding" evidence="4">
    <location>
        <begin position="704"/>
        <end position="715"/>
    </location>
</feature>
<feature type="region of interest" description="Disordered" evidence="6">
    <location>
        <begin position="718"/>
        <end position="742"/>
    </location>
</feature>
<feature type="region of interest" description="Disordered" evidence="6">
    <location>
        <begin position="839"/>
        <end position="897"/>
    </location>
</feature>
<feature type="region of interest" description="CAD (involved in subunit assembly)" evidence="1">
    <location>
        <begin position="909"/>
        <end position="948"/>
    </location>
</feature>
<feature type="region of interest" description="Disordered" evidence="6">
    <location>
        <begin position="946"/>
        <end position="965"/>
    </location>
</feature>
<feature type="short sequence motif" description="Selectivity filter" evidence="1">
    <location>
        <begin position="432"/>
        <end position="437"/>
    </location>
</feature>
<feature type="compositionally biased region" description="Polar residues" evidence="6">
    <location>
        <begin position="721"/>
        <end position="742"/>
    </location>
</feature>
<feature type="compositionally biased region" description="Basic and acidic residues" evidence="6">
    <location>
        <begin position="871"/>
        <end position="885"/>
    </location>
</feature>
<feature type="binding site">
    <location>
        <begin position="550"/>
        <end position="667"/>
    </location>
    <ligand>
        <name>a nucleoside 3',5'-cyclic phosphate</name>
        <dbReference type="ChEBI" id="CHEBI:58464"/>
    </ligand>
</feature>
<feature type="modified residue" description="Phosphoserine" evidence="3">
    <location>
        <position position="883"/>
    </location>
</feature>
<feature type="glycosylation site" description="N-linked (GlcNAc...) asparagine" evidence="4">
    <location>
        <position position="403"/>
    </location>
</feature>
<feature type="cross-link" description="Glycyl lysine isopeptide (Lys-Gly) (interchain with G-Cter in ubiquitin)" evidence="2">
    <location>
        <position position="785"/>
    </location>
</feature>
<feature type="sequence conflict" description="In Ref. 1; AAF19354." evidence="10" ref="1">
    <original>G</original>
    <variation>R</variation>
    <location>
        <position position="397"/>
    </location>
</feature>
<protein>
    <recommendedName>
        <fullName evidence="10">Voltage-gated delayed rectifier potassium channel KCNH5</fullName>
    </recommendedName>
    <alternativeName>
        <fullName>Ether-a-go-go potassium channel 2</fullName>
        <shortName evidence="9">rEAG2</shortName>
    </alternativeName>
    <alternativeName>
        <fullName>Potassium voltage-gated channel subfamily H member 5</fullName>
    </alternativeName>
    <alternativeName>
        <fullName>Voltage-gated potassium channel subunit Kv10.2</fullName>
    </alternativeName>
</protein>
<accession>Q9EPI9</accession>
<accession>O88893</accession>
<accession>Q9QXT2</accession>